<reference key="1">
    <citation type="journal article" date="1996" name="Aust. J. Chem.">
        <title>New antibiotic uperin peptides from the dorsal glands of the australian toadlet Uperoleia mjobergii.</title>
        <authorList>
            <person name="Bradford A.M."/>
            <person name="Bowie J.H."/>
            <person name="Tyler M.J."/>
            <person name="Wallace J.C."/>
        </authorList>
    </citation>
    <scope>PROTEIN SEQUENCE</scope>
    <scope>AMIDATION AT PHE-17</scope>
    <scope>MASS SPECTROMETRY</scope>
    <source>
        <tissue>Skin secretion</tissue>
    </source>
</reference>
<organism>
    <name type="scientific">Uperoleia mjobergii</name>
    <name type="common">Mjoberg's toadlet</name>
    <name type="synonym">Pseudophryne mjobergii</name>
    <dbReference type="NCBI Taxonomy" id="104954"/>
    <lineage>
        <taxon>Eukaryota</taxon>
        <taxon>Metazoa</taxon>
        <taxon>Chordata</taxon>
        <taxon>Craniata</taxon>
        <taxon>Vertebrata</taxon>
        <taxon>Euteleostomi</taxon>
        <taxon>Amphibia</taxon>
        <taxon>Batrachia</taxon>
        <taxon>Anura</taxon>
        <taxon>Neobatrachia</taxon>
        <taxon>Myobatrachoidea</taxon>
        <taxon>Myobatrachidae</taxon>
        <taxon>Myobatrachinae</taxon>
        <taxon>Uperoleia</taxon>
    </lineage>
</organism>
<protein>
    <recommendedName>
        <fullName>Uperin-3.6</fullName>
    </recommendedName>
</protein>
<dbReference type="GO" id="GO:0005576">
    <property type="term" value="C:extracellular region"/>
    <property type="evidence" value="ECO:0007669"/>
    <property type="project" value="UniProtKB-SubCell"/>
</dbReference>
<dbReference type="GO" id="GO:0042742">
    <property type="term" value="P:defense response to bacterium"/>
    <property type="evidence" value="ECO:0007669"/>
    <property type="project" value="UniProtKB-KW"/>
</dbReference>
<sequence length="17" mass="1828">GVIDAAKKVVNVLKNLF</sequence>
<evidence type="ECO:0000269" key="1">
    <source ref="1"/>
</evidence>
<accession>P82043</accession>
<comment type="function">
    <text>Shows antibacterial activity against B.cereus, L.lactis, L.innocua, M.luteus, S.aureus, S.epidermidis and S.uberis.</text>
</comment>
<comment type="subcellular location">
    <subcellularLocation>
        <location>Secreted</location>
    </subcellularLocation>
</comment>
<comment type="tissue specificity">
    <text>Expressed by the skin dorsal glands.</text>
</comment>
<comment type="mass spectrometry" mass="1826.0" method="FAB" evidence="1"/>
<name>UPE36_UPEMJ</name>
<feature type="peptide" id="PRO_0000043859" description="Uperin-3.6">
    <location>
        <begin position="1"/>
        <end position="17"/>
    </location>
</feature>
<feature type="modified residue" description="Phenylalanine amide" evidence="1">
    <location>
        <position position="17"/>
    </location>
</feature>
<keyword id="KW-0027">Amidation</keyword>
<keyword id="KW-0878">Amphibian defense peptide</keyword>
<keyword id="KW-0044">Antibiotic</keyword>
<keyword id="KW-0929">Antimicrobial</keyword>
<keyword id="KW-0903">Direct protein sequencing</keyword>
<keyword id="KW-0964">Secreted</keyword>
<proteinExistence type="evidence at protein level"/>